<accession>B8ER20</accession>
<dbReference type="EC" id="5.6.1.7" evidence="1"/>
<dbReference type="EMBL" id="CP001280">
    <property type="protein sequence ID" value="ACK49765.1"/>
    <property type="molecule type" value="Genomic_DNA"/>
</dbReference>
<dbReference type="RefSeq" id="WP_012589835.1">
    <property type="nucleotide sequence ID" value="NC_011666.1"/>
</dbReference>
<dbReference type="SMR" id="B8ER20"/>
<dbReference type="STRING" id="395965.Msil_0795"/>
<dbReference type="KEGG" id="msl:Msil_0795"/>
<dbReference type="eggNOG" id="COG0459">
    <property type="taxonomic scope" value="Bacteria"/>
</dbReference>
<dbReference type="HOGENOM" id="CLU_016503_3_0_5"/>
<dbReference type="OrthoDB" id="9766614at2"/>
<dbReference type="Proteomes" id="UP000002257">
    <property type="component" value="Chromosome"/>
</dbReference>
<dbReference type="GO" id="GO:0005737">
    <property type="term" value="C:cytoplasm"/>
    <property type="evidence" value="ECO:0007669"/>
    <property type="project" value="UniProtKB-SubCell"/>
</dbReference>
<dbReference type="GO" id="GO:0005524">
    <property type="term" value="F:ATP binding"/>
    <property type="evidence" value="ECO:0007669"/>
    <property type="project" value="UniProtKB-UniRule"/>
</dbReference>
<dbReference type="GO" id="GO:0140662">
    <property type="term" value="F:ATP-dependent protein folding chaperone"/>
    <property type="evidence" value="ECO:0007669"/>
    <property type="project" value="InterPro"/>
</dbReference>
<dbReference type="GO" id="GO:0016853">
    <property type="term" value="F:isomerase activity"/>
    <property type="evidence" value="ECO:0007669"/>
    <property type="project" value="UniProtKB-KW"/>
</dbReference>
<dbReference type="GO" id="GO:0051082">
    <property type="term" value="F:unfolded protein binding"/>
    <property type="evidence" value="ECO:0007669"/>
    <property type="project" value="UniProtKB-UniRule"/>
</dbReference>
<dbReference type="GO" id="GO:0042026">
    <property type="term" value="P:protein refolding"/>
    <property type="evidence" value="ECO:0007669"/>
    <property type="project" value="UniProtKB-UniRule"/>
</dbReference>
<dbReference type="CDD" id="cd03344">
    <property type="entry name" value="GroEL"/>
    <property type="match status" value="1"/>
</dbReference>
<dbReference type="FunFam" id="1.10.560.10:FF:000001">
    <property type="entry name" value="60 kDa chaperonin"/>
    <property type="match status" value="1"/>
</dbReference>
<dbReference type="FunFam" id="3.50.7.10:FF:000001">
    <property type="entry name" value="60 kDa chaperonin"/>
    <property type="match status" value="1"/>
</dbReference>
<dbReference type="Gene3D" id="3.50.7.10">
    <property type="entry name" value="GroEL"/>
    <property type="match status" value="1"/>
</dbReference>
<dbReference type="Gene3D" id="1.10.560.10">
    <property type="entry name" value="GroEL-like equatorial domain"/>
    <property type="match status" value="1"/>
</dbReference>
<dbReference type="Gene3D" id="3.30.260.10">
    <property type="entry name" value="TCP-1-like chaperonin intermediate domain"/>
    <property type="match status" value="1"/>
</dbReference>
<dbReference type="HAMAP" id="MF_00600">
    <property type="entry name" value="CH60"/>
    <property type="match status" value="1"/>
</dbReference>
<dbReference type="InterPro" id="IPR018370">
    <property type="entry name" value="Chaperonin_Cpn60_CS"/>
</dbReference>
<dbReference type="InterPro" id="IPR001844">
    <property type="entry name" value="Cpn60/GroEL"/>
</dbReference>
<dbReference type="InterPro" id="IPR002423">
    <property type="entry name" value="Cpn60/GroEL/TCP-1"/>
</dbReference>
<dbReference type="InterPro" id="IPR027409">
    <property type="entry name" value="GroEL-like_apical_dom_sf"/>
</dbReference>
<dbReference type="InterPro" id="IPR027413">
    <property type="entry name" value="GROEL-like_equatorial_sf"/>
</dbReference>
<dbReference type="InterPro" id="IPR027410">
    <property type="entry name" value="TCP-1-like_intermed_sf"/>
</dbReference>
<dbReference type="NCBIfam" id="TIGR02348">
    <property type="entry name" value="GroEL"/>
    <property type="match status" value="1"/>
</dbReference>
<dbReference type="NCBIfam" id="NF000592">
    <property type="entry name" value="PRK00013.1"/>
    <property type="match status" value="1"/>
</dbReference>
<dbReference type="NCBIfam" id="NF009487">
    <property type="entry name" value="PRK12849.1"/>
    <property type="match status" value="1"/>
</dbReference>
<dbReference type="NCBIfam" id="NF009488">
    <property type="entry name" value="PRK12850.1"/>
    <property type="match status" value="1"/>
</dbReference>
<dbReference type="NCBIfam" id="NF009489">
    <property type="entry name" value="PRK12851.1"/>
    <property type="match status" value="1"/>
</dbReference>
<dbReference type="PANTHER" id="PTHR45633">
    <property type="entry name" value="60 KDA HEAT SHOCK PROTEIN, MITOCHONDRIAL"/>
    <property type="match status" value="1"/>
</dbReference>
<dbReference type="Pfam" id="PF00118">
    <property type="entry name" value="Cpn60_TCP1"/>
    <property type="match status" value="1"/>
</dbReference>
<dbReference type="PRINTS" id="PR00298">
    <property type="entry name" value="CHAPERONIN60"/>
</dbReference>
<dbReference type="SUPFAM" id="SSF52029">
    <property type="entry name" value="GroEL apical domain-like"/>
    <property type="match status" value="1"/>
</dbReference>
<dbReference type="SUPFAM" id="SSF48592">
    <property type="entry name" value="GroEL equatorial domain-like"/>
    <property type="match status" value="1"/>
</dbReference>
<dbReference type="SUPFAM" id="SSF54849">
    <property type="entry name" value="GroEL-intermediate domain like"/>
    <property type="match status" value="1"/>
</dbReference>
<dbReference type="PROSITE" id="PS00296">
    <property type="entry name" value="CHAPERONINS_CPN60"/>
    <property type="match status" value="1"/>
</dbReference>
<gene>
    <name evidence="1" type="primary">groEL</name>
    <name evidence="1" type="synonym">groL</name>
    <name type="ordered locus">Msil_0795</name>
</gene>
<protein>
    <recommendedName>
        <fullName evidence="1">Chaperonin GroEL</fullName>
        <ecNumber evidence="1">5.6.1.7</ecNumber>
    </recommendedName>
    <alternativeName>
        <fullName evidence="1">60 kDa chaperonin</fullName>
    </alternativeName>
    <alternativeName>
        <fullName evidence="1">Chaperonin-60</fullName>
        <shortName evidence="1">Cpn60</shortName>
    </alternativeName>
</protein>
<proteinExistence type="inferred from homology"/>
<sequence length="547" mass="57608">MAAKDVRFSSDARDRMLRGIDILNNAVKVTLGPKGRNVVIEKSFGAPRITKDGVTVAKEIELSDKFENLGAQLIREVASKQNDAAGDGTTTATILAASIVREGTKAVAAGLNPMDLKRGIDIAVAAVVADLKANSKKVTSNEEIAQVGTISANGDKSVGEMISTAMQKVGNEGVITVEEAKSLETELDVVEGMQFDRGYLSPYFITNAEKMIAELEDPFILVHEKKLSSLQALLPVLEAVVQSGKPLVIIAEDVEGEALATLVVNKLRGGLKVAAVKAPGFGDRRKAMLEDIAILTSGTLISEEIGIKLENVTLQMLGRAKRIRIDKESTTIIDGAGAKGEIEARIAQIKSQIAETTSDYDREKMQERLAKLAGGVAVIRVGGASEVEVKEKKDRVDDALNATRAAVEEGVLPGGGVALLRAIKALEGLTVENADQKTGVDIVRKAIQTPARQIVDNSGGDGAVVVGKLIENPSYAYGYNAQTDEYGDLVKLGIIDPTKVVRTALQDAASVGGLLITTEAIIAEQPKKDSPAMPGGGGMGGMGGMDF</sequence>
<reference key="1">
    <citation type="journal article" date="2010" name="J. Bacteriol.">
        <title>Complete genome sequence of the aerobic facultative methanotroph Methylocella silvestris BL2.</title>
        <authorList>
            <person name="Chen Y."/>
            <person name="Crombie A."/>
            <person name="Rahman M.T."/>
            <person name="Dedysh S.N."/>
            <person name="Liesack W."/>
            <person name="Stott M.B."/>
            <person name="Alam M."/>
            <person name="Theisen A.R."/>
            <person name="Murrell J.C."/>
            <person name="Dunfield P.F."/>
        </authorList>
    </citation>
    <scope>NUCLEOTIDE SEQUENCE [LARGE SCALE GENOMIC DNA]</scope>
    <source>
        <strain>DSM 15510 / CIP 108128 / LMG 27833 / NCIMB 13906 / BL2</strain>
    </source>
</reference>
<comment type="function">
    <text evidence="1">Together with its co-chaperonin GroES, plays an essential role in assisting protein folding. The GroEL-GroES system forms a nano-cage that allows encapsulation of the non-native substrate proteins and provides a physical environment optimized to promote and accelerate protein folding.</text>
</comment>
<comment type="catalytic activity">
    <reaction evidence="1">
        <text>ATP + H2O + a folded polypeptide = ADP + phosphate + an unfolded polypeptide.</text>
        <dbReference type="EC" id="5.6.1.7"/>
    </reaction>
</comment>
<comment type="subunit">
    <text evidence="1">Forms a cylinder of 14 subunits composed of two heptameric rings stacked back-to-back. Interacts with the co-chaperonin GroES.</text>
</comment>
<comment type="subcellular location">
    <subcellularLocation>
        <location evidence="1">Cytoplasm</location>
    </subcellularLocation>
</comment>
<comment type="similarity">
    <text evidence="1">Belongs to the chaperonin (HSP60) family.</text>
</comment>
<organism>
    <name type="scientific">Methylocella silvestris (strain DSM 15510 / CIP 108128 / LMG 27833 / NCIMB 13906 / BL2)</name>
    <dbReference type="NCBI Taxonomy" id="395965"/>
    <lineage>
        <taxon>Bacteria</taxon>
        <taxon>Pseudomonadati</taxon>
        <taxon>Pseudomonadota</taxon>
        <taxon>Alphaproteobacteria</taxon>
        <taxon>Hyphomicrobiales</taxon>
        <taxon>Beijerinckiaceae</taxon>
        <taxon>Methylocella</taxon>
    </lineage>
</organism>
<feature type="chain" id="PRO_1000147039" description="Chaperonin GroEL">
    <location>
        <begin position="1"/>
        <end position="547"/>
    </location>
</feature>
<feature type="region of interest" description="Disordered" evidence="2">
    <location>
        <begin position="527"/>
        <end position="547"/>
    </location>
</feature>
<feature type="compositionally biased region" description="Gly residues" evidence="2">
    <location>
        <begin position="534"/>
        <end position="547"/>
    </location>
</feature>
<feature type="binding site" evidence="1">
    <location>
        <begin position="30"/>
        <end position="33"/>
    </location>
    <ligand>
        <name>ATP</name>
        <dbReference type="ChEBI" id="CHEBI:30616"/>
    </ligand>
</feature>
<feature type="binding site" evidence="1">
    <location>
        <position position="51"/>
    </location>
    <ligand>
        <name>ATP</name>
        <dbReference type="ChEBI" id="CHEBI:30616"/>
    </ligand>
</feature>
<feature type="binding site" evidence="1">
    <location>
        <begin position="87"/>
        <end position="91"/>
    </location>
    <ligand>
        <name>ATP</name>
        <dbReference type="ChEBI" id="CHEBI:30616"/>
    </ligand>
</feature>
<feature type="binding site" evidence="1">
    <location>
        <position position="415"/>
    </location>
    <ligand>
        <name>ATP</name>
        <dbReference type="ChEBI" id="CHEBI:30616"/>
    </ligand>
</feature>
<feature type="binding site" evidence="1">
    <location>
        <position position="496"/>
    </location>
    <ligand>
        <name>ATP</name>
        <dbReference type="ChEBI" id="CHEBI:30616"/>
    </ligand>
</feature>
<keyword id="KW-0067">ATP-binding</keyword>
<keyword id="KW-0143">Chaperone</keyword>
<keyword id="KW-0963">Cytoplasm</keyword>
<keyword id="KW-0413">Isomerase</keyword>
<keyword id="KW-0547">Nucleotide-binding</keyword>
<keyword id="KW-1185">Reference proteome</keyword>
<name>CH60_METSB</name>
<evidence type="ECO:0000255" key="1">
    <source>
        <dbReference type="HAMAP-Rule" id="MF_00600"/>
    </source>
</evidence>
<evidence type="ECO:0000256" key="2">
    <source>
        <dbReference type="SAM" id="MobiDB-lite"/>
    </source>
</evidence>